<accession>P13234</accession>
<accession>A1A5L5</accession>
<accession>Q63892</accession>
<protein>
    <recommendedName>
        <fullName>Calcium/calmodulin-dependent protein kinase type IV</fullName>
        <shortName>CaMK IV</shortName>
        <ecNumber>2.7.11.17</ecNumber>
    </recommendedName>
    <alternativeName>
        <fullName>CaM kinase-GR</fullName>
    </alternativeName>
    <alternativeName>
        <fullName>Calspermin</fullName>
    </alternativeName>
</protein>
<evidence type="ECO:0000250" key="1"/>
<evidence type="ECO:0000250" key="2">
    <source>
        <dbReference type="UniProtKB" id="Q16566"/>
    </source>
</evidence>
<evidence type="ECO:0000255" key="3"/>
<evidence type="ECO:0000255" key="4">
    <source>
        <dbReference type="PROSITE-ProRule" id="PRU00159"/>
    </source>
</evidence>
<evidence type="ECO:0000255" key="5">
    <source>
        <dbReference type="PROSITE-ProRule" id="PRU10027"/>
    </source>
</evidence>
<evidence type="ECO:0000256" key="6">
    <source>
        <dbReference type="SAM" id="MobiDB-lite"/>
    </source>
</evidence>
<evidence type="ECO:0000269" key="7">
    <source>
    </source>
</evidence>
<evidence type="ECO:0000269" key="8">
    <source>
    </source>
</evidence>
<evidence type="ECO:0000269" key="9">
    <source>
    </source>
</evidence>
<evidence type="ECO:0000269" key="10">
    <source>
    </source>
</evidence>
<evidence type="ECO:0000269" key="11">
    <source>
    </source>
</evidence>
<evidence type="ECO:0000269" key="12">
    <source>
    </source>
</evidence>
<evidence type="ECO:0000269" key="13">
    <source>
    </source>
</evidence>
<evidence type="ECO:0000303" key="14">
    <source>
    </source>
</evidence>
<evidence type="ECO:0000303" key="15">
    <source>
    </source>
</evidence>
<evidence type="ECO:0000305" key="16"/>
<evidence type="ECO:0007744" key="17">
    <source>
    </source>
</evidence>
<proteinExistence type="evidence at protein level"/>
<comment type="function">
    <molecule>Isoform 1</molecule>
    <text evidence="1">Calcium/calmodulin-dependent protein kinase that operates in the calcium-triggered CaMKK-CaMK4 signaling cascade and regulates, mainly by phosphorylation, the activity of several transcription activators, such as CREB1, MEF2D, JUN and RORA, which play pivotal roles in immune response, inflammation, and memory consolidation. In the thymus, regulates the CD4(+)/CD8(+) double positive thymocytes selection threshold during T-cell ontogeny. In CD4 memory T-cells, is required to link T-cell antigen receptor (TCR) signaling to the production of IL2, IFNG and IL4 (through the regulation of CREB and MEF2). Regulates the differentiation and survival phases of osteoclasts and dendritic cells (DCs). Mediates DCs survival by linking TLR4 and the regulation of temporal expression of BCL2. Phosphorylates the transcription activator CREB1 on 'Ser-133' in hippocampal neuron nuclei and contribute to memory consolidation and long term potentiation (LTP) in the hippocampus. Can activate the MAP kinases MAPK1/ERK2, MAPK8/JNK1 and MAPK14/p38 and stimulate transcription through the phosphorylation of ELK1 and ATF2. Can also phosphorylate in vitro CREBBP, PRM2, MEF2A and STMN1/OP18 (By similarity).</text>
</comment>
<comment type="function">
    <molecule>Isoform 2</molecule>
    <text evidence="8 11 12">Heat-stable, acidic, calmodulin-binding protein.</text>
</comment>
<comment type="catalytic activity">
    <reaction>
        <text>L-seryl-[protein] + ATP = O-phospho-L-seryl-[protein] + ADP + H(+)</text>
        <dbReference type="Rhea" id="RHEA:17989"/>
        <dbReference type="Rhea" id="RHEA-COMP:9863"/>
        <dbReference type="Rhea" id="RHEA-COMP:11604"/>
        <dbReference type="ChEBI" id="CHEBI:15378"/>
        <dbReference type="ChEBI" id="CHEBI:29999"/>
        <dbReference type="ChEBI" id="CHEBI:30616"/>
        <dbReference type="ChEBI" id="CHEBI:83421"/>
        <dbReference type="ChEBI" id="CHEBI:456216"/>
        <dbReference type="EC" id="2.7.11.17"/>
    </reaction>
</comment>
<comment type="catalytic activity">
    <reaction>
        <text>L-threonyl-[protein] + ATP = O-phospho-L-threonyl-[protein] + ADP + H(+)</text>
        <dbReference type="Rhea" id="RHEA:46608"/>
        <dbReference type="Rhea" id="RHEA-COMP:11060"/>
        <dbReference type="Rhea" id="RHEA-COMP:11605"/>
        <dbReference type="ChEBI" id="CHEBI:15378"/>
        <dbReference type="ChEBI" id="CHEBI:30013"/>
        <dbReference type="ChEBI" id="CHEBI:30616"/>
        <dbReference type="ChEBI" id="CHEBI:61977"/>
        <dbReference type="ChEBI" id="CHEBI:456216"/>
        <dbReference type="EC" id="2.7.11.17"/>
    </reaction>
</comment>
<comment type="activity regulation">
    <text evidence="1">Activated by Ca(2+)/calmodulin. Binding of calmodulin results in conformational change that relieves intrasteric autoinhibition and allows phosphorylation of Thr-196 within the activation loop by CaMKK1 or CaMKK2. Phosphorylation of Thr-196 results in a 10-20-fold increase in total activity to generate Ca(2+)/calmodulin-independent activity. Autophosphorylation of the N-terminus Ser-11 and Ser-12 is required for full activation. Inactivated by protein phosphatase 2A (PPP2CA/PPP2CB) which dephosphorylates Thr-196, thereby terminating autonomous activity and helping to maintain the enzyme in its autoinhibited state (By similarity).</text>
</comment>
<comment type="subunit">
    <text evidence="1">Monomer. Interacts with protein phosphatase 2A (PPP2CA/PPP2CB); the interaction is mutually exclusive with binding to Ca(2+)/calmodulin.</text>
</comment>
<comment type="subcellular location">
    <subcellularLocation>
        <location>Cytoplasm</location>
    </subcellularLocation>
    <subcellularLocation>
        <location>Nucleus</location>
    </subcellularLocation>
    <text evidence="1">Localized in hippocampal neuron nuclei. In spermatids, associated with chromatin and nuclear matrix.</text>
</comment>
<comment type="alternative products">
    <event type="alternative promoter"/>
    <event type="alternative splicing"/>
    <isoform>
        <id>P13234-1</id>
        <name>1</name>
        <name>Calcium-calmodulin-dependent protein kinase type IV</name>
        <name>Beta</name>
        <sequence type="displayed"/>
    </isoform>
    <isoform>
        <id>P13234-2</id>
        <name>2</name>
        <name>Calspermin</name>
        <name>Testis-specific</name>
        <sequence type="described" ref="VSP_004789"/>
    </isoform>
</comment>
<comment type="tissue specificity">
    <text>Isoform 1 is expressed in brain and isoform 2 is testis specific.</text>
</comment>
<comment type="domain">
    <text evidence="1">The autoinhibitory domain overlaps with the calmodulin binding region and interacts in the inactive folded state with the catalytic domain as a pseudosubstrate.</text>
</comment>
<comment type="PTM">
    <text evidence="1">Phosphorylated by CaMKK1 and CaMKK2 on Thr-196. Dephosphorylated by protein phosphatase 2A. Autophosphorylated on Ser-11 and Ser-12 (By similarity).</text>
</comment>
<comment type="PTM">
    <text evidence="1">Glycosylation at Ser-185 modulates the phosphorylation of CaMK4 at Thr-196 and negatively regulates its activity toward CREB1 in basal conditions and during early inomycin stimulation.</text>
</comment>
<comment type="PTM">
    <text>The N-terminus of calspermin is blocked.</text>
</comment>
<comment type="similarity">
    <text evidence="16">Belongs to the protein kinase superfamily. CAMK Ser/Thr protein kinase family. CaMK subfamily.</text>
</comment>
<comment type="sequence caution" evidence="16">
    <conflict type="erroneous initiation">
        <sequence resource="EMBL-CDS" id="AAB28372"/>
    </conflict>
    <text>Truncated N-terminus.</text>
</comment>
<keyword id="KW-1064">Adaptive immunity</keyword>
<keyword id="KW-0877">Alternative promoter usage</keyword>
<keyword id="KW-0025">Alternative splicing</keyword>
<keyword id="KW-0067">ATP-binding</keyword>
<keyword id="KW-0106">Calcium</keyword>
<keyword id="KW-0112">Calmodulin-binding</keyword>
<keyword id="KW-0963">Cytoplasm</keyword>
<keyword id="KW-0903">Direct protein sequencing</keyword>
<keyword id="KW-0325">Glycoprotein</keyword>
<keyword id="KW-0391">Immunity</keyword>
<keyword id="KW-0395">Inflammatory response</keyword>
<keyword id="KW-0418">Kinase</keyword>
<keyword id="KW-0547">Nucleotide-binding</keyword>
<keyword id="KW-0539">Nucleus</keyword>
<keyword id="KW-0597">Phosphoprotein</keyword>
<keyword id="KW-1185">Reference proteome</keyword>
<keyword id="KW-0723">Serine/threonine-protein kinase</keyword>
<keyword id="KW-0808">Transferase</keyword>
<dbReference type="EC" id="2.7.11.17"/>
<dbReference type="EMBL" id="M63334">
    <property type="protein sequence ID" value="AAA40865.1"/>
    <property type="molecule type" value="mRNA"/>
</dbReference>
<dbReference type="EMBL" id="M74488">
    <property type="protein sequence ID" value="AAA40845.1"/>
    <property type="molecule type" value="Genomic_DNA"/>
</dbReference>
<dbReference type="EMBL" id="M64757">
    <property type="protein sequence ID" value="AAA40856.1"/>
    <property type="molecule type" value="mRNA"/>
</dbReference>
<dbReference type="EMBL" id="M64757">
    <property type="protein sequence ID" value="AAA40857.1"/>
    <property type="molecule type" value="mRNA"/>
</dbReference>
<dbReference type="EMBL" id="S65840">
    <property type="protein sequence ID" value="AAB28372.1"/>
    <property type="status" value="ALT_INIT"/>
    <property type="molecule type" value="mRNA"/>
</dbReference>
<dbReference type="EMBL" id="BC128706">
    <property type="protein sequence ID" value="AAI28707.1"/>
    <property type="molecule type" value="mRNA"/>
</dbReference>
<dbReference type="EMBL" id="J04600">
    <property type="protein sequence ID" value="AAA41867.1"/>
    <property type="molecule type" value="mRNA"/>
</dbReference>
<dbReference type="EMBL" id="J04446">
    <property type="protein sequence ID" value="AAA40990.1"/>
    <property type="molecule type" value="mRNA"/>
</dbReference>
<dbReference type="PIR" id="A41103">
    <property type="entry name" value="TVRTC4"/>
</dbReference>
<dbReference type="PIR" id="I52637">
    <property type="entry name" value="I52637"/>
</dbReference>
<dbReference type="RefSeq" id="NP_036859.2">
    <molecule id="P13234-1"/>
    <property type="nucleotide sequence ID" value="NM_012727.3"/>
</dbReference>
<dbReference type="RefSeq" id="XP_017456340.1">
    <property type="nucleotide sequence ID" value="XM_017600851.1"/>
</dbReference>
<dbReference type="SMR" id="P13234"/>
<dbReference type="BioGRID" id="247127">
    <property type="interactions" value="2"/>
</dbReference>
<dbReference type="FunCoup" id="P13234">
    <property type="interactions" value="660"/>
</dbReference>
<dbReference type="STRING" id="10116.ENSRNOP00000027771"/>
<dbReference type="GlyCosmos" id="P13234">
    <property type="glycosylation" value="7 sites, No reported glycans"/>
</dbReference>
<dbReference type="GlyGen" id="P13234">
    <property type="glycosylation" value="7 sites"/>
</dbReference>
<dbReference type="iPTMnet" id="P13234"/>
<dbReference type="PhosphoSitePlus" id="P13234"/>
<dbReference type="PaxDb" id="10116-ENSRNOP00000027771"/>
<dbReference type="Ensembl" id="ENSRNOT00000027771.5">
    <molecule id="P13234-1"/>
    <property type="protein sequence ID" value="ENSRNOP00000027771.4"/>
    <property type="gene ID" value="ENSRNOG00000020478.8"/>
</dbReference>
<dbReference type="GeneID" id="25050"/>
<dbReference type="KEGG" id="rno:25050"/>
<dbReference type="UCSC" id="RGD:2264">
    <molecule id="P13234-1"/>
    <property type="organism name" value="rat"/>
</dbReference>
<dbReference type="AGR" id="RGD:2264"/>
<dbReference type="CTD" id="814"/>
<dbReference type="RGD" id="2264">
    <property type="gene designation" value="Camk4"/>
</dbReference>
<dbReference type="eggNOG" id="KOG0032">
    <property type="taxonomic scope" value="Eukaryota"/>
</dbReference>
<dbReference type="GeneTree" id="ENSGT00940000160006"/>
<dbReference type="HOGENOM" id="CLU_000288_63_0_1"/>
<dbReference type="InParanoid" id="P13234"/>
<dbReference type="OrthoDB" id="40902at2759"/>
<dbReference type="PhylomeDB" id="P13234"/>
<dbReference type="TreeFam" id="TF351230"/>
<dbReference type="BRENDA" id="2.7.11.17">
    <property type="organism ID" value="5301"/>
</dbReference>
<dbReference type="Reactome" id="R-RNO-111932">
    <property type="pathway name" value="CaMK IV-mediated phosphorylation of CREB"/>
</dbReference>
<dbReference type="Reactome" id="R-RNO-442729">
    <property type="pathway name" value="CREB1 phosphorylation through the activation of CaMKII/CaMKK/CaMKIV cascasde"/>
</dbReference>
<dbReference type="PRO" id="PR:P13234"/>
<dbReference type="Proteomes" id="UP000002494">
    <property type="component" value="Chromosome 18"/>
</dbReference>
<dbReference type="Bgee" id="ENSRNOG00000020478">
    <property type="expression patterns" value="Expressed in testis and 13 other cell types or tissues"/>
</dbReference>
<dbReference type="GO" id="GO:0005737">
    <property type="term" value="C:cytoplasm"/>
    <property type="evidence" value="ECO:0000266"/>
    <property type="project" value="RGD"/>
</dbReference>
<dbReference type="GO" id="GO:0098982">
    <property type="term" value="C:GABA-ergic synapse"/>
    <property type="evidence" value="ECO:0000266"/>
    <property type="project" value="RGD"/>
</dbReference>
<dbReference type="GO" id="GO:0098978">
    <property type="term" value="C:glutamatergic synapse"/>
    <property type="evidence" value="ECO:0000314"/>
    <property type="project" value="SynGO"/>
</dbReference>
<dbReference type="GO" id="GO:0005654">
    <property type="term" value="C:nucleoplasm"/>
    <property type="evidence" value="ECO:0000304"/>
    <property type="project" value="Reactome"/>
</dbReference>
<dbReference type="GO" id="GO:0005634">
    <property type="term" value="C:nucleus"/>
    <property type="evidence" value="ECO:0000266"/>
    <property type="project" value="RGD"/>
</dbReference>
<dbReference type="GO" id="GO:0098794">
    <property type="term" value="C:postsynapse"/>
    <property type="evidence" value="ECO:0000314"/>
    <property type="project" value="SynGO"/>
</dbReference>
<dbReference type="GO" id="GO:0005524">
    <property type="term" value="F:ATP binding"/>
    <property type="evidence" value="ECO:0007669"/>
    <property type="project" value="UniProtKB-KW"/>
</dbReference>
<dbReference type="GO" id="GO:0009931">
    <property type="term" value="F:calcium-dependent protein serine/threonine kinase activity"/>
    <property type="evidence" value="ECO:0000318"/>
    <property type="project" value="GO_Central"/>
</dbReference>
<dbReference type="GO" id="GO:0004683">
    <property type="term" value="F:calcium/calmodulin-dependent protein kinase activity"/>
    <property type="evidence" value="ECO:0000314"/>
    <property type="project" value="RGD"/>
</dbReference>
<dbReference type="GO" id="GO:0005516">
    <property type="term" value="F:calmodulin binding"/>
    <property type="evidence" value="ECO:0000318"/>
    <property type="project" value="GO_Central"/>
</dbReference>
<dbReference type="GO" id="GO:0106310">
    <property type="term" value="F:protein serine kinase activity"/>
    <property type="evidence" value="ECO:0007669"/>
    <property type="project" value="RHEA"/>
</dbReference>
<dbReference type="GO" id="GO:0002250">
    <property type="term" value="P:adaptive immune response"/>
    <property type="evidence" value="ECO:0007669"/>
    <property type="project" value="UniProtKB-KW"/>
</dbReference>
<dbReference type="GO" id="GO:0006954">
    <property type="term" value="P:inflammatory response"/>
    <property type="evidence" value="ECO:0007669"/>
    <property type="project" value="UniProtKB-KW"/>
</dbReference>
<dbReference type="GO" id="GO:0035556">
    <property type="term" value="P:intracellular signal transduction"/>
    <property type="evidence" value="ECO:0000318"/>
    <property type="project" value="GO_Central"/>
</dbReference>
<dbReference type="GO" id="GO:0007616">
    <property type="term" value="P:long-term memory"/>
    <property type="evidence" value="ECO:0000250"/>
    <property type="project" value="UniProtKB"/>
</dbReference>
<dbReference type="GO" id="GO:0043011">
    <property type="term" value="P:myeloid dendritic cell differentiation"/>
    <property type="evidence" value="ECO:0000250"/>
    <property type="project" value="UniProtKB"/>
</dbReference>
<dbReference type="GO" id="GO:0007270">
    <property type="term" value="P:neuron-neuron synaptic transmission"/>
    <property type="evidence" value="ECO:0000266"/>
    <property type="project" value="RGD"/>
</dbReference>
<dbReference type="GO" id="GO:0006913">
    <property type="term" value="P:nucleocytoplasmic transport"/>
    <property type="evidence" value="ECO:0000266"/>
    <property type="project" value="RGD"/>
</dbReference>
<dbReference type="GO" id="GO:0045893">
    <property type="term" value="P:positive regulation of DNA-templated transcription"/>
    <property type="evidence" value="ECO:0000250"/>
    <property type="project" value="UniProtKB"/>
</dbReference>
<dbReference type="GO" id="GO:0046827">
    <property type="term" value="P:positive regulation of protein export from nucleus"/>
    <property type="evidence" value="ECO:0000266"/>
    <property type="project" value="RGD"/>
</dbReference>
<dbReference type="GO" id="GO:0099527">
    <property type="term" value="P:postsynapse to nucleus signaling pathway"/>
    <property type="evidence" value="ECO:0000266"/>
    <property type="project" value="RGD"/>
</dbReference>
<dbReference type="GO" id="GO:0099170">
    <property type="term" value="P:postsynaptic modulation of chemical synaptic transmission"/>
    <property type="evidence" value="ECO:0000266"/>
    <property type="project" value="RGD"/>
</dbReference>
<dbReference type="GO" id="GO:0007165">
    <property type="term" value="P:signal transduction"/>
    <property type="evidence" value="ECO:0000266"/>
    <property type="project" value="RGD"/>
</dbReference>
<dbReference type="CDD" id="cd14085">
    <property type="entry name" value="STKc_CaMKIV"/>
    <property type="match status" value="1"/>
</dbReference>
<dbReference type="FunFam" id="1.10.510.10:FF:000255">
    <property type="entry name" value="Calcium/calmodulin-dependent protein kinase type IV"/>
    <property type="match status" value="1"/>
</dbReference>
<dbReference type="FunFam" id="3.30.200.20:FF:000279">
    <property type="entry name" value="Calcium/calmodulin-dependent protein kinase type IV"/>
    <property type="match status" value="1"/>
</dbReference>
<dbReference type="Gene3D" id="3.30.200.20">
    <property type="entry name" value="Phosphorylase Kinase, domain 1"/>
    <property type="match status" value="1"/>
</dbReference>
<dbReference type="Gene3D" id="1.10.510.10">
    <property type="entry name" value="Transferase(Phosphotransferase) domain 1"/>
    <property type="match status" value="1"/>
</dbReference>
<dbReference type="InterPro" id="IPR011009">
    <property type="entry name" value="Kinase-like_dom_sf"/>
</dbReference>
<dbReference type="InterPro" id="IPR000719">
    <property type="entry name" value="Prot_kinase_dom"/>
</dbReference>
<dbReference type="InterPro" id="IPR017441">
    <property type="entry name" value="Protein_kinase_ATP_BS"/>
</dbReference>
<dbReference type="InterPro" id="IPR008271">
    <property type="entry name" value="Ser/Thr_kinase_AS"/>
</dbReference>
<dbReference type="PANTHER" id="PTHR24347">
    <property type="entry name" value="SERINE/THREONINE-PROTEIN KINASE"/>
    <property type="match status" value="1"/>
</dbReference>
<dbReference type="Pfam" id="PF00069">
    <property type="entry name" value="Pkinase"/>
    <property type="match status" value="1"/>
</dbReference>
<dbReference type="SMART" id="SM00220">
    <property type="entry name" value="S_TKc"/>
    <property type="match status" value="1"/>
</dbReference>
<dbReference type="SUPFAM" id="SSF56112">
    <property type="entry name" value="Protein kinase-like (PK-like)"/>
    <property type="match status" value="1"/>
</dbReference>
<dbReference type="PROSITE" id="PS00107">
    <property type="entry name" value="PROTEIN_KINASE_ATP"/>
    <property type="match status" value="1"/>
</dbReference>
<dbReference type="PROSITE" id="PS50011">
    <property type="entry name" value="PROTEIN_KINASE_DOM"/>
    <property type="match status" value="1"/>
</dbReference>
<dbReference type="PROSITE" id="PS00108">
    <property type="entry name" value="PROTEIN_KINASE_ST"/>
    <property type="match status" value="1"/>
</dbReference>
<feature type="chain" id="PRO_0000086108" description="Calcium/calmodulin-dependent protein kinase type IV">
    <location>
        <begin position="1"/>
        <end position="474"/>
    </location>
</feature>
<feature type="domain" description="Protein kinase" evidence="4">
    <location>
        <begin position="42"/>
        <end position="296"/>
    </location>
</feature>
<feature type="region of interest" description="Autoinhibitory domain">
    <location>
        <begin position="297"/>
        <end position="336"/>
    </location>
</feature>
<feature type="region of interest" description="PP2A-binding" evidence="1">
    <location>
        <begin position="302"/>
        <end position="319"/>
    </location>
</feature>
<feature type="region of interest" description="Calmodulin-binding" evidence="3">
    <location>
        <begin position="318"/>
        <end position="337"/>
    </location>
</feature>
<feature type="region of interest" description="Disordered" evidence="6">
    <location>
        <begin position="336"/>
        <end position="474"/>
    </location>
</feature>
<feature type="compositionally biased region" description="Polar residues" evidence="6">
    <location>
        <begin position="342"/>
        <end position="356"/>
    </location>
</feature>
<feature type="compositionally biased region" description="Basic and acidic residues" evidence="6">
    <location>
        <begin position="360"/>
        <end position="392"/>
    </location>
</feature>
<feature type="compositionally biased region" description="Acidic residues" evidence="6">
    <location>
        <begin position="393"/>
        <end position="413"/>
    </location>
</feature>
<feature type="compositionally biased region" description="Basic and acidic residues" evidence="6">
    <location>
        <begin position="431"/>
        <end position="454"/>
    </location>
</feature>
<feature type="active site" description="Proton acceptor" evidence="4 5">
    <location>
        <position position="160"/>
    </location>
</feature>
<feature type="binding site" evidence="4">
    <location>
        <begin position="48"/>
        <end position="56"/>
    </location>
    <ligand>
        <name>ATP</name>
        <dbReference type="ChEBI" id="CHEBI:30616"/>
    </ligand>
</feature>
<feature type="binding site" evidence="4">
    <location>
        <position position="71"/>
    </location>
    <ligand>
        <name>ATP</name>
        <dbReference type="ChEBI" id="CHEBI:30616"/>
    </ligand>
</feature>
<feature type="modified residue" description="Phosphoserine; by autocatalysis" evidence="1">
    <location>
        <position position="11"/>
    </location>
</feature>
<feature type="modified residue" description="Phosphoserine; by autocatalysis" evidence="2">
    <location>
        <position position="12"/>
    </location>
</feature>
<feature type="modified residue" description="Phosphothreonine; by CaMKK1 and CaMKK2" evidence="2">
    <location>
        <position position="196"/>
    </location>
</feature>
<feature type="modified residue" description="Phosphoserine; by autocatalysis" evidence="13">
    <location>
        <position position="332"/>
    </location>
</feature>
<feature type="modified residue" description="Phosphoserine" evidence="17">
    <location>
        <position position="337"/>
    </location>
</feature>
<feature type="modified residue" description="Phosphoserine" evidence="17">
    <location>
        <position position="437"/>
    </location>
</feature>
<feature type="modified residue" description="Phosphoserine" evidence="17">
    <location>
        <position position="443"/>
    </location>
</feature>
<feature type="glycosylation site" description="O-linked (GlcNAc) threonine" evidence="1">
    <location>
        <position position="53"/>
    </location>
</feature>
<feature type="glycosylation site" description="O-linked (GlcNAc) serine" evidence="1">
    <location>
        <position position="54"/>
    </location>
</feature>
<feature type="glycosylation site" description="O-linked (GlcNAc) serine" evidence="1">
    <location>
        <position position="133"/>
    </location>
</feature>
<feature type="glycosylation site" description="O-linked (GlcNAc) serine" evidence="1">
    <location>
        <position position="185"/>
    </location>
</feature>
<feature type="glycosylation site" description="O-linked (GlcNAc) serine" evidence="1">
    <location>
        <position position="340"/>
    </location>
</feature>
<feature type="glycosylation site" description="O-linked (GlcNAc) serine" evidence="1">
    <location>
        <position position="341"/>
    </location>
</feature>
<feature type="glycosylation site" description="O-linked (GlcNAc) serine" evidence="1">
    <location>
        <position position="352"/>
    </location>
</feature>
<feature type="splice variant" id="VSP_004789" description="In isoform 2." evidence="14 15">
    <location>
        <begin position="1"/>
        <end position="305"/>
    </location>
</feature>
<feature type="mutagenesis site" description="Loss of kinase activity; confers cytoplasmic localization." evidence="7">
    <original>K</original>
    <variation>M</variation>
    <location>
        <position position="71"/>
    </location>
</feature>
<feature type="mutagenesis site" description="Loss of kinase activity; confers nuclear localization." evidence="7 9">
    <original>T</original>
    <variation>A</variation>
    <location>
        <position position="196"/>
    </location>
</feature>
<feature type="mutagenesis site" description="Loss of kinase activity; confers nuclear localization." evidence="7">
    <original>E</original>
    <variation>K</variation>
    <location>
        <position position="207"/>
    </location>
</feature>
<feature type="mutagenesis site" description="Increases Ca(2+)/calmodulin-independent activity." evidence="10">
    <original>HMDT</original>
    <variation>DEDD</variation>
    <location>
        <begin position="305"/>
        <end position="308"/>
    </location>
</feature>
<feature type="mutagenesis site" description="Increases Ca(2+)/calmodulin-independent activity." evidence="10">
    <original>FN</original>
    <variation>DD</variation>
    <location>
        <begin position="316"/>
        <end position="317"/>
    </location>
</feature>
<feature type="mutagenesis site" description="No decrease in Ca(2+)/calmodulin-dependent activity after activation by CaMKKs." evidence="13">
    <original>S</original>
    <variation>A</variation>
    <location>
        <position position="332"/>
    </location>
</feature>
<feature type="sequence conflict" description="In Ref. 1; AAA40845." evidence="16" ref="1">
    <original>KQ</original>
    <variation>NE</variation>
    <location>
        <begin position="142"/>
        <end position="143"/>
    </location>
</feature>
<feature type="sequence conflict" description="In Ref. 1; AAA40845/AAA40865 and 6; AAA41867." evidence="16" ref="1 6">
    <original>M</original>
    <variation>I</variation>
    <location>
        <position position="372"/>
    </location>
</feature>
<sequence length="474" mass="53151">MLKVTVPSCPSSPCSSVTSSTENLVPDYWIDGSKRDPLSDFFEVESELGRGATSIVYRCKQKGTQKPYALKVLKKTVDKKIVRTEIGVLLRLSHPNIIKLKEIFETPTEISLVLELVTGGELFDRIVEKGYYSERDAADAVKQILEAVAYLHENGIVHRDLKPENLLYATPAPDAPLKIADFGLSKIVEHQVLMKTVCGTPGYCAPEILRGCAYGPEVDMWSVGIITYILLCGFEPFYDERGDQFMFRRILNCEYYFISPWWDEVSLNAKDLVKKLIVLDPKKRLTTFQALQHPWVTGKAANFVHMDTAQKKLQEFNARRKLKAAVKAVVASSRLGSASSSHTNIQESNKASSEAQPAQDGKDKTDPLENKMQAGDHEAAKAAADETMKLQSEEVEEEEGVKEEEEEEEEEEETSRMVPQEPEDRLETDDQEMKRNSEETLKSVEEEMDPKAEEEAAAVGLGVPPQQDAILPEY</sequence>
<gene>
    <name type="primary">Camk4</name>
</gene>
<reference key="1">
    <citation type="journal article" date="1991" name="Proc. Natl. Acad. Sci. U.S.A.">
        <title>Relationship of genes encoding Ca2+/calmodulin-dependent protein kinase Gr and calspermin: a gene within a gene.</title>
        <authorList>
            <person name="Ohmstede C.-A."/>
            <person name="Bland M.M."/>
            <person name="Merrill B.M."/>
            <person name="Sahyoun N."/>
        </authorList>
    </citation>
    <scope>NUCLEOTIDE SEQUENCE [MRNA] (ISOFORM 1)</scope>
    <scope>NUCLEOTIDE SEQUENCE [GENOMIC DNA] OF 437-474</scope>
    <scope>PARTIAL PROTEIN SEQUENCE</scope>
    <scope>ALTERNATIVE SPLICING</scope>
</reference>
<reference key="2">
    <citation type="journal article" date="1991" name="Mol. Cell. Biol.">
        <title>A novel Ca2+/calmodulin-dependent protein kinase and a male germ cell-specific calmodulin-binding protein are derived from the same gene.</title>
        <authorList>
            <person name="Means A.R."/>
            <person name="Cruzalegui F."/>
            <person name="Lemagueresse B."/>
            <person name="Needleman D.S."/>
            <person name="Slaughter G.R."/>
            <person name="Ono T."/>
        </authorList>
    </citation>
    <scope>NUCLEOTIDE SEQUENCE [MRNA] (ISOFORMS 1 AND 2)</scope>
</reference>
<reference key="3">
    <citation type="journal article" date="1993" name="Brain Res. Mol. Brain Res.">
        <title>Cloning and sequencing of a gene encoding the beta polypeptide of Ca2+/calmodulin-dependent protein kinase IV and its expression confined to the mature cerebellar granule cells.</title>
        <authorList>
            <person name="Sakagami H."/>
            <person name="Kondo H."/>
        </authorList>
    </citation>
    <scope>NUCLEOTIDE SEQUENCE [MRNA] (ISOFORM 1)</scope>
</reference>
<reference key="4">
    <citation type="journal article" date="1995" name="J. Biol. Chem.">
        <title>Organization and analysis of the complete rat calmodulin-dependent protein kinase IV gene.</title>
        <authorList>
            <person name="Sun Z."/>
            <person name="Means R.L."/>
            <person name="LeMagueresse B."/>
            <person name="Means A.R."/>
        </authorList>
    </citation>
    <scope>NUCLEOTIDE SEQUENCE [GENOMIC DNA]</scope>
</reference>
<reference key="5">
    <citation type="journal article" date="2004" name="Genome Res.">
        <title>The status, quality, and expansion of the NIH full-length cDNA project: the Mammalian Gene Collection (MGC).</title>
        <authorList>
            <consortium name="The MGC Project Team"/>
        </authorList>
    </citation>
    <scope>NUCLEOTIDE SEQUENCE [LARGE SCALE MRNA] (ISOFORM 1)</scope>
    <source>
        <tissue>Testis</tissue>
    </source>
</reference>
<reference key="6">
    <citation type="journal article" date="1989" name="J. Biol. Chem.">
        <title>Ca2+/calmodulin-dependent protein kinase enriched in cerebellar granule cells. Identification of a novel neuronal calmodulin-dependent protein kinase.</title>
        <authorList>
            <person name="Ohmstede C.-A."/>
            <person name="Jenson K.F."/>
            <person name="Sahyoun N."/>
        </authorList>
    </citation>
    <scope>NUCLEOTIDE SEQUENCE [MRNA] OF 250-474 (ISOFORM 1)</scope>
    <source>
        <strain>Sprague-Dawley</strain>
        <tissue>Brain</tissue>
    </source>
</reference>
<reference key="7">
    <citation type="journal article" date="1989" name="J. Biol. Chem.">
        <title>Molecular cloning sequence and distribution of rat calspermin, a high affinity calmodulin-binding protein.</title>
        <authorList>
            <person name="Ono T."/>
            <person name="Slaughter G.R."/>
            <person name="Cook R.G."/>
            <person name="Means A.R."/>
        </authorList>
    </citation>
    <scope>NUCLEOTIDE SEQUENCE [MRNA] OF 306-474 (ISOFORM 2)</scope>
    <scope>PROTEIN SEQUENCE OF 335-361</scope>
    <source>
        <strain>Sprague-Dawley</strain>
    </source>
</reference>
<reference key="8">
    <citation type="journal article" date="1991" name="Science">
        <title>CREB: a Ca(2+)-regulated transcription factor phosphorylated by calmodulin-dependent kinases.</title>
        <authorList>
            <person name="Sheng M."/>
            <person name="Thompson M.A."/>
            <person name="Greenberg M.E."/>
        </authorList>
    </citation>
    <scope>FUNCTION IN PHOSPHORYLATION OF CREB1</scope>
</reference>
<reference key="9">
    <citation type="journal article" date="1994" name="J. Biol. Chem.">
        <title>Activation mechanisms for Ca2+/calmodulin-dependent protein kinase IV. Identification of a brain CaM-kinase IV kinase.</title>
        <authorList>
            <person name="Tokumitsu H."/>
            <person name="Brickey D.A."/>
            <person name="Glod J."/>
            <person name="Hidaka H."/>
            <person name="Sikela J."/>
            <person name="Soderling T.R."/>
        </authorList>
    </citation>
    <scope>ACTIVITY REGULATION</scope>
    <scope>SUBUNIT</scope>
    <scope>MUTAGENESIS OF 305-HIS--THR-308 AND 316-PHE-ASN-317</scope>
</reference>
<reference key="10">
    <citation type="journal article" date="1994" name="Mol. Cell. Biol.">
        <title>Calcium/calmodulin-dependent protein kinase types II and IV differentially regulate CREB-dependent gene expression.</title>
        <authorList>
            <person name="Matthews R.P."/>
            <person name="Guthrie C.R."/>
            <person name="Wailes L.M."/>
            <person name="Zhao X."/>
            <person name="Means A.R."/>
            <person name="McKnight G.S."/>
        </authorList>
    </citation>
    <scope>FUNCTION IN PHOSPHORYLATION OF CREB1</scope>
    <scope>SUBCELLULAR LOCATION</scope>
</reference>
<reference key="11">
    <citation type="journal article" date="1995" name="J. Biochem.">
        <title>Full activation of brain calmodulin-dependent protein kinase IV requires phosphorylation of the amino-terminal serine-rich region by calmodulin-dependent protein kinase IV kinase.</title>
        <authorList>
            <person name="Okuno S."/>
            <person name="Kitani T."/>
            <person name="Fujisawa H."/>
        </authorList>
    </citation>
    <scope>ACTIVITY REGULATION</scope>
    <scope>PHOSPHORYLATION</scope>
</reference>
<reference key="12">
    <citation type="journal article" date="1995" name="J. Biol. Chem.">
        <title>Phosphorylation and activation of Ca(2+)-calmodulin-dependent protein kinase IV by Ca(2+)-calmodulin-dependent protein kinase Ia kinase. Phosphorylation of threonine 196 is essential for activation.</title>
        <authorList>
            <person name="Selbert M.A."/>
            <person name="Anderson K.A."/>
            <person name="Huang Q.H."/>
            <person name="Goldstein E.G."/>
            <person name="Means A.R."/>
            <person name="Edelman A.M."/>
        </authorList>
    </citation>
    <scope>ACTIVITY REGULATION</scope>
    <scope>PHOSPHORYLATION AT THR-196</scope>
    <scope>MUTAGENESIS OF THR-196</scope>
</reference>
<reference key="13">
    <citation type="journal article" date="1996" name="J. Biol. Chem.">
        <title>Regulation of activating transcription factor-1 and the cAMP response element-binding protein by Ca2+/calmodulin-dependent protein kinases type I, II, and IV.</title>
        <authorList>
            <person name="Sun P."/>
            <person name="Lou L."/>
            <person name="Maurer R.A."/>
        </authorList>
    </citation>
    <scope>FUNCTION IN PHOSPHORYLATION OF ATF1 AND CREB1</scope>
</reference>
<reference key="14">
    <citation type="journal article" date="1996" name="J. Biol. Chem.">
        <title>Inactivation of calmodulin-dependent protein kinase IV by autophosphorylation of serine 332 within the putative calmodulin-binding domain.</title>
        <authorList>
            <person name="Watanabe S."/>
            <person name="Okuno S."/>
            <person name="Kitani T."/>
            <person name="Fujisawa H."/>
        </authorList>
    </citation>
    <scope>ACTIVITY REGULATION</scope>
    <scope>PHOSPHORYLATION AT SER-332</scope>
    <scope>MUTAGENESIS OF SER-332</scope>
</reference>
<reference key="15">
    <citation type="journal article" date="1996" name="J. Biol. Chem.">
        <title>Multiple Ca(2+)-calmodulin-dependent protein kinase kinases from rat brain. Purification, regulation by Ca(2+)-calmodulin, and partial amino acid sequence.</title>
        <authorList>
            <person name="Edelman A.M."/>
            <person name="Mitchelhill K.I."/>
            <person name="Selbert M.A."/>
            <person name="Anderson K.A."/>
            <person name="Hook S.S."/>
            <person name="Stapleton D."/>
            <person name="Goldstein E.G."/>
            <person name="Means A.R."/>
            <person name="Kemp B.E."/>
        </authorList>
    </citation>
    <scope>PHOSPHORYLATION BY CAMKK1 AND CAMKK2</scope>
</reference>
<reference key="16">
    <citation type="journal article" date="1998" name="J. Biol. Chem.">
        <title>Components of a calmodulin-dependent protein kinase cascade. Molecular cloning, functional characterization and cellular localization of Ca2+/calmodulin-dependent protein kinase kinase beta.</title>
        <authorList>
            <person name="Anderson K.A."/>
            <person name="Means R.L."/>
            <person name="Huang Q.-H."/>
            <person name="Kemp B.E."/>
            <person name="Goldstein E.G."/>
            <person name="Selbert M.A."/>
            <person name="Edelman A.M."/>
            <person name="Fremeau R.T."/>
            <person name="Means A.R."/>
        </authorList>
    </citation>
    <scope>PHOSPHORYLATION BY CAMKK2</scope>
</reference>
<reference key="17">
    <citation type="journal article" date="1998" name="Science">
        <title>A signaling complex of Ca2+-calmodulin-dependent protein kinase IV and protein phosphatase 2A.</title>
        <authorList>
            <person name="Westphal R.S."/>
            <person name="Anderson K.A."/>
            <person name="Means A.R."/>
            <person name="Wadzinski B.E."/>
        </authorList>
    </citation>
    <scope>INTERACTION WITH SERINE/THREONINE PROTEIN PHOSPHATASE 2A</scope>
    <scope>DEPHOSPHORYLATION</scope>
</reference>
<reference key="18">
    <citation type="journal article" date="1999" name="J. Biol. Chem.">
        <title>Substrate recognition by Ca2+/Calmodulin-dependent protein kinase kinase. Role of the arg-pro-rich insert domain.</title>
        <authorList>
            <person name="Tokumitsu H."/>
            <person name="Takahashi N."/>
            <person name="Eto K."/>
            <person name="Yano S."/>
            <person name="Soderling T.R."/>
            <person name="Muramatsu M.-A."/>
        </authorList>
    </citation>
    <scope>INTERACTION WITH CAMKK1</scope>
</reference>
<reference key="19">
    <citation type="journal article" date="2004" name="J. Biol. Chem.">
        <title>Catalytic activity is required for calcium/calmodulin-dependent protein kinase IV to enter the nucleus.</title>
        <authorList>
            <person name="Lemrow S.M."/>
            <person name="Anderson K.A."/>
            <person name="Joseph J.D."/>
            <person name="Ribar T.J."/>
            <person name="Noeldner P.K."/>
            <person name="Means A.R."/>
        </authorList>
    </citation>
    <scope>SUBCELLULAR LOCATION</scope>
    <scope>MUTAGENESIS OF LYS-71; THR-196 AND GLU-207</scope>
</reference>
<reference key="20">
    <citation type="journal article" date="2012" name="Nat. Commun.">
        <title>Quantitative maps of protein phosphorylation sites across 14 different rat organs and tissues.</title>
        <authorList>
            <person name="Lundby A."/>
            <person name="Secher A."/>
            <person name="Lage K."/>
            <person name="Nordsborg N.B."/>
            <person name="Dmytriyev A."/>
            <person name="Lundby C."/>
            <person name="Olsen J.V."/>
        </authorList>
    </citation>
    <scope>PHOSPHORYLATION [LARGE SCALE ANALYSIS] AT SER-337; SER-437 AND SER-443</scope>
    <scope>IDENTIFICATION BY MASS SPECTROMETRY [LARGE SCALE ANALYSIS]</scope>
</reference>
<organism>
    <name type="scientific">Rattus norvegicus</name>
    <name type="common">Rat</name>
    <dbReference type="NCBI Taxonomy" id="10116"/>
    <lineage>
        <taxon>Eukaryota</taxon>
        <taxon>Metazoa</taxon>
        <taxon>Chordata</taxon>
        <taxon>Craniata</taxon>
        <taxon>Vertebrata</taxon>
        <taxon>Euteleostomi</taxon>
        <taxon>Mammalia</taxon>
        <taxon>Eutheria</taxon>
        <taxon>Euarchontoglires</taxon>
        <taxon>Glires</taxon>
        <taxon>Rodentia</taxon>
        <taxon>Myomorpha</taxon>
        <taxon>Muroidea</taxon>
        <taxon>Muridae</taxon>
        <taxon>Murinae</taxon>
        <taxon>Rattus</taxon>
    </lineage>
</organism>
<name>KCC4_RAT</name>